<organism>
    <name type="scientific">Bacillus subtilis (strain 168)</name>
    <dbReference type="NCBI Taxonomy" id="224308"/>
    <lineage>
        <taxon>Bacteria</taxon>
        <taxon>Bacillati</taxon>
        <taxon>Bacillota</taxon>
        <taxon>Bacilli</taxon>
        <taxon>Bacillales</taxon>
        <taxon>Bacillaceae</taxon>
        <taxon>Bacillus</taxon>
    </lineage>
</organism>
<accession>P39639</accession>
<feature type="chain" id="PRO_0000064801" description="H2HPP isomerase">
    <location>
        <begin position="1"/>
        <end position="235"/>
    </location>
</feature>
<feature type="domain" description="Cupin type-2 1" evidence="1">
    <location>
        <begin position="41"/>
        <end position="106"/>
    </location>
</feature>
<feature type="domain" description="Cupin type-2 2" evidence="1">
    <location>
        <begin position="151"/>
        <end position="216"/>
    </location>
</feature>
<feature type="binding site" evidence="4 6">
    <location>
        <position position="50"/>
    </location>
    <ligand>
        <name>a divalent metal cation</name>
        <dbReference type="ChEBI" id="CHEBI:60240"/>
        <label>1</label>
    </ligand>
</feature>
<feature type="binding site" evidence="4 6">
    <location>
        <position position="52"/>
    </location>
    <ligand>
        <name>a divalent metal cation</name>
        <dbReference type="ChEBI" id="CHEBI:60240"/>
        <label>1</label>
    </ligand>
</feature>
<feature type="binding site" evidence="4 6">
    <location>
        <position position="56"/>
    </location>
    <ligand>
        <name>a divalent metal cation</name>
        <dbReference type="ChEBI" id="CHEBI:60240"/>
        <label>1</label>
    </ligand>
</feature>
<feature type="binding site" evidence="4 6">
    <location>
        <position position="91"/>
    </location>
    <ligand>
        <name>a divalent metal cation</name>
        <dbReference type="ChEBI" id="CHEBI:60240"/>
        <label>1</label>
    </ligand>
</feature>
<feature type="binding site" evidence="4 6">
    <location>
        <position position="162"/>
    </location>
    <ligand>
        <name>a divalent metal cation</name>
        <dbReference type="ChEBI" id="CHEBI:60240"/>
        <label>2</label>
    </ligand>
</feature>
<feature type="binding site" evidence="4 6">
    <location>
        <position position="164"/>
    </location>
    <ligand>
        <name>a divalent metal cation</name>
        <dbReference type="ChEBI" id="CHEBI:60240"/>
        <label>2</label>
    </ligand>
</feature>
<feature type="binding site" evidence="4 6">
    <location>
        <position position="168"/>
    </location>
    <ligand>
        <name>a divalent metal cation</name>
        <dbReference type="ChEBI" id="CHEBI:60240"/>
        <label>2</label>
    </ligand>
</feature>
<feature type="binding site" evidence="4 6">
    <location>
        <position position="202"/>
    </location>
    <ligand>
        <name>a divalent metal cation</name>
        <dbReference type="ChEBI" id="CHEBI:60240"/>
        <label>2</label>
    </ligand>
</feature>
<feature type="binding site" evidence="4 6">
    <location>
        <position position="223"/>
    </location>
    <ligand>
        <name>substrate</name>
    </ligand>
</feature>
<feature type="mutagenesis site" description="Significant decrease of isomerase activity." evidence="4">
    <original>K</original>
    <variation>A</variation>
    <location>
        <position position="107"/>
    </location>
</feature>
<feature type="helix" evidence="17">
    <location>
        <begin position="4"/>
        <end position="11"/>
    </location>
</feature>
<feature type="strand" evidence="17">
    <location>
        <begin position="16"/>
        <end position="19"/>
    </location>
</feature>
<feature type="strand" evidence="17">
    <location>
        <begin position="25"/>
        <end position="31"/>
    </location>
</feature>
<feature type="strand" evidence="17">
    <location>
        <begin position="34"/>
        <end position="41"/>
    </location>
</feature>
<feature type="strand" evidence="17">
    <location>
        <begin position="45"/>
        <end position="50"/>
    </location>
</feature>
<feature type="strand" evidence="17">
    <location>
        <begin position="53"/>
        <end position="69"/>
    </location>
</feature>
<feature type="strand" evidence="17">
    <location>
        <begin position="72"/>
        <end position="77"/>
    </location>
</feature>
<feature type="turn" evidence="17">
    <location>
        <begin position="78"/>
        <end position="80"/>
    </location>
</feature>
<feature type="strand" evidence="17">
    <location>
        <begin position="82"/>
        <end position="85"/>
    </location>
</feature>
<feature type="strand" evidence="17">
    <location>
        <begin position="91"/>
        <end position="95"/>
    </location>
</feature>
<feature type="strand" evidence="17">
    <location>
        <begin position="97"/>
        <end position="99"/>
    </location>
</feature>
<feature type="strand" evidence="17">
    <location>
        <begin position="101"/>
        <end position="108"/>
    </location>
</feature>
<feature type="strand" evidence="17">
    <location>
        <begin position="121"/>
        <end position="123"/>
    </location>
</feature>
<feature type="strand" evidence="18">
    <location>
        <begin position="127"/>
        <end position="132"/>
    </location>
</feature>
<feature type="strand" evidence="17">
    <location>
        <begin position="137"/>
        <end position="142"/>
    </location>
</feature>
<feature type="strand" evidence="17">
    <location>
        <begin position="145"/>
        <end position="152"/>
    </location>
</feature>
<feature type="turn" evidence="17">
    <location>
        <begin position="154"/>
        <end position="156"/>
    </location>
</feature>
<feature type="strand" evidence="17">
    <location>
        <begin position="157"/>
        <end position="162"/>
    </location>
</feature>
<feature type="strand" evidence="17">
    <location>
        <begin position="165"/>
        <end position="172"/>
    </location>
</feature>
<feature type="strand" evidence="17">
    <location>
        <begin position="177"/>
        <end position="181"/>
    </location>
</feature>
<feature type="strand" evidence="17">
    <location>
        <begin position="184"/>
        <end position="188"/>
    </location>
</feature>
<feature type="strand" evidence="17">
    <location>
        <begin position="193"/>
        <end position="196"/>
    </location>
</feature>
<feature type="strand" evidence="17">
    <location>
        <begin position="202"/>
        <end position="206"/>
    </location>
</feature>
<feature type="strand" evidence="17">
    <location>
        <begin position="208"/>
        <end position="210"/>
    </location>
</feature>
<feature type="strand" evidence="17">
    <location>
        <begin position="212"/>
        <end position="220"/>
    </location>
</feature>
<proteinExistence type="evidence at protein level"/>
<name>BACB_BACSU</name>
<comment type="function">
    <text evidence="3 4 5 7 8">Part of the bacABCDEF operon responsible for the biosynthesis of the nonribosomally synthesized dipeptide antibiotic bacilysin, composed of L-alanine and L-anticapsin. Bacilysin is an irreversible inactivator of the glutaminase domain of glucosamine synthetase (PubMed:15609023, PubMed:20052993). BacB catalyzes the allylic isomerization of the endocyclic-delta(4),delta(8)-7R-dihydro-hydroxyphenylpyruvate (en-H2HPP) to generate a mixture of 3E,7R- and 3Z, 7R-olefins (E/Z ration of 3/1) of the exocyclic-delta(3),delta(5)-dihydro-hydroxyphenylpyruvate (ex-H2HPP) (PubMed:19776011, PubMed:20052993, PubMed:22483065, PubMed:22765234).</text>
</comment>
<comment type="catalytic activity">
    <reaction evidence="4 5 7">
        <text>3-[(4R)-4-hydroxycyclohexa-1,5-dien-1-yl]-2-oxopropanoate = 3-[(1E,4R)-4-hydroxycyclohex-2-en-1-ylidene]pyruvate</text>
        <dbReference type="Rhea" id="RHEA:33819"/>
        <dbReference type="ChEBI" id="CHEBI:84354"/>
        <dbReference type="ChEBI" id="CHEBI:84355"/>
        <dbReference type="EC" id="5.3.3.19"/>
    </reaction>
</comment>
<comment type="cofactor">
    <cofactor evidence="4 6">
        <name>Fe(2+)</name>
        <dbReference type="ChEBI" id="CHEBI:29033"/>
    </cofactor>
    <cofactor evidence="4 6">
        <name>Co(2+)</name>
        <dbReference type="ChEBI" id="CHEBI:48828"/>
    </cofactor>
    <text evidence="4 6">Binds 2 Fe(2+) or Co(2+) ions per subunit.</text>
</comment>
<comment type="biophysicochemical properties">
    <kinetics>
        <KM evidence="4">423 uM for en-H2HPP</KM>
        <Vmax evidence="4">53.49 nmol/min/ug enzyme</Vmax>
        <text evidence="4">kcat is 1471 min(-1) for isomerase activity with en-H2HPP as substrate.</text>
    </kinetics>
</comment>
<comment type="pathway">
    <text evidence="8 13 14 15 16">Antibiotic biosynthesis; bacilysin biosynthesis.</text>
</comment>
<comment type="subunit">
    <text evidence="4 6">Monomer.</text>
</comment>
<comment type="subcellular location">
    <subcellularLocation>
        <location evidence="12">Cytoplasm</location>
    </subcellularLocation>
</comment>
<comment type="induction">
    <text evidence="2">The compound guanosine 5'-diphosphate 3'-diphosphate (ppGpp) is essential for the transcription of the bacABCDEF operon and BacG, and GTP regulates the transcription of both this operon and ywfH via the CodY-mediated regulation system.</text>
</comment>
<sequence length="235" mass="26840">MKTKEDMQELYFPTPKLIEWENGVRQYSTVRGDTEVLMSYVPPHTNVEPHQHKEVQIGMVVSGELMMTVGDVTRKMTALESAYIAPPHVPHGARNDTDQEVIAIDIKRLKADETYTSPEDYFLDIFKTRDLLPGMEVTFFVEDWVEIMLAKIPGNGGEMPFHKHRNEQIGICIGGGYDMTVEGCTVEMKFGTAYFCEPREDHGAINRSEKESKSINIFFPPRYNRAKAKKMKADE</sequence>
<gene>
    <name evidence="9" type="primary">bacB</name>
    <name evidence="11" type="synonym">ywfC</name>
    <name type="ordered locus">BSU37730</name>
    <name type="ORF">ipa-81d</name>
</gene>
<keyword id="KW-0002">3D-structure</keyword>
<keyword id="KW-0045">Antibiotic biosynthesis</keyword>
<keyword id="KW-0170">Cobalt</keyword>
<keyword id="KW-0963">Cytoplasm</keyword>
<keyword id="KW-0408">Iron</keyword>
<keyword id="KW-0413">Isomerase</keyword>
<keyword id="KW-0479">Metal-binding</keyword>
<keyword id="KW-1185">Reference proteome</keyword>
<reference key="1">
    <citation type="journal article" date="1993" name="Mol. Microbiol.">
        <title>Bacillus subtilis genome project: cloning and sequencing of the 97 kb region from 325 degrees to 333 degrees.</title>
        <authorList>
            <person name="Glaser P."/>
            <person name="Kunst F."/>
            <person name="Arnaud M."/>
            <person name="Coudart M.P."/>
            <person name="Gonzales W."/>
            <person name="Hullo M.-F."/>
            <person name="Ionescu M."/>
            <person name="Lubochinsky B."/>
            <person name="Marcelino L."/>
            <person name="Moszer I."/>
            <person name="Presecan E."/>
            <person name="Santana M."/>
            <person name="Schneider E."/>
            <person name="Schweizer J."/>
            <person name="Vertes A."/>
            <person name="Rapoport G."/>
            <person name="Danchin A."/>
        </authorList>
    </citation>
    <scope>NUCLEOTIDE SEQUENCE [GENOMIC DNA]</scope>
    <source>
        <strain>168</strain>
    </source>
</reference>
<reference key="2">
    <citation type="journal article" date="1997" name="Nature">
        <title>The complete genome sequence of the Gram-positive bacterium Bacillus subtilis.</title>
        <authorList>
            <person name="Kunst F."/>
            <person name="Ogasawara N."/>
            <person name="Moszer I."/>
            <person name="Albertini A.M."/>
            <person name="Alloni G."/>
            <person name="Azevedo V."/>
            <person name="Bertero M.G."/>
            <person name="Bessieres P."/>
            <person name="Bolotin A."/>
            <person name="Borchert S."/>
            <person name="Borriss R."/>
            <person name="Boursier L."/>
            <person name="Brans A."/>
            <person name="Braun M."/>
            <person name="Brignell S.C."/>
            <person name="Bron S."/>
            <person name="Brouillet S."/>
            <person name="Bruschi C.V."/>
            <person name="Caldwell B."/>
            <person name="Capuano V."/>
            <person name="Carter N.M."/>
            <person name="Choi S.-K."/>
            <person name="Codani J.-J."/>
            <person name="Connerton I.F."/>
            <person name="Cummings N.J."/>
            <person name="Daniel R.A."/>
            <person name="Denizot F."/>
            <person name="Devine K.M."/>
            <person name="Duesterhoeft A."/>
            <person name="Ehrlich S.D."/>
            <person name="Emmerson P.T."/>
            <person name="Entian K.-D."/>
            <person name="Errington J."/>
            <person name="Fabret C."/>
            <person name="Ferrari E."/>
            <person name="Foulger D."/>
            <person name="Fritz C."/>
            <person name="Fujita M."/>
            <person name="Fujita Y."/>
            <person name="Fuma S."/>
            <person name="Galizzi A."/>
            <person name="Galleron N."/>
            <person name="Ghim S.-Y."/>
            <person name="Glaser P."/>
            <person name="Goffeau A."/>
            <person name="Golightly E.J."/>
            <person name="Grandi G."/>
            <person name="Guiseppi G."/>
            <person name="Guy B.J."/>
            <person name="Haga K."/>
            <person name="Haiech J."/>
            <person name="Harwood C.R."/>
            <person name="Henaut A."/>
            <person name="Hilbert H."/>
            <person name="Holsappel S."/>
            <person name="Hosono S."/>
            <person name="Hullo M.-F."/>
            <person name="Itaya M."/>
            <person name="Jones L.-M."/>
            <person name="Joris B."/>
            <person name="Karamata D."/>
            <person name="Kasahara Y."/>
            <person name="Klaerr-Blanchard M."/>
            <person name="Klein C."/>
            <person name="Kobayashi Y."/>
            <person name="Koetter P."/>
            <person name="Koningstein G."/>
            <person name="Krogh S."/>
            <person name="Kumano M."/>
            <person name="Kurita K."/>
            <person name="Lapidus A."/>
            <person name="Lardinois S."/>
            <person name="Lauber J."/>
            <person name="Lazarevic V."/>
            <person name="Lee S.-M."/>
            <person name="Levine A."/>
            <person name="Liu H."/>
            <person name="Masuda S."/>
            <person name="Mauel C."/>
            <person name="Medigue C."/>
            <person name="Medina N."/>
            <person name="Mellado R.P."/>
            <person name="Mizuno M."/>
            <person name="Moestl D."/>
            <person name="Nakai S."/>
            <person name="Noback M."/>
            <person name="Noone D."/>
            <person name="O'Reilly M."/>
            <person name="Ogawa K."/>
            <person name="Ogiwara A."/>
            <person name="Oudega B."/>
            <person name="Park S.-H."/>
            <person name="Parro V."/>
            <person name="Pohl T.M."/>
            <person name="Portetelle D."/>
            <person name="Porwollik S."/>
            <person name="Prescott A.M."/>
            <person name="Presecan E."/>
            <person name="Pujic P."/>
            <person name="Purnelle B."/>
            <person name="Rapoport G."/>
            <person name="Rey M."/>
            <person name="Reynolds S."/>
            <person name="Rieger M."/>
            <person name="Rivolta C."/>
            <person name="Rocha E."/>
            <person name="Roche B."/>
            <person name="Rose M."/>
            <person name="Sadaie Y."/>
            <person name="Sato T."/>
            <person name="Scanlan E."/>
            <person name="Schleich S."/>
            <person name="Schroeter R."/>
            <person name="Scoffone F."/>
            <person name="Sekiguchi J."/>
            <person name="Sekowska A."/>
            <person name="Seror S.J."/>
            <person name="Serror P."/>
            <person name="Shin B.-S."/>
            <person name="Soldo B."/>
            <person name="Sorokin A."/>
            <person name="Tacconi E."/>
            <person name="Takagi T."/>
            <person name="Takahashi H."/>
            <person name="Takemaru K."/>
            <person name="Takeuchi M."/>
            <person name="Tamakoshi A."/>
            <person name="Tanaka T."/>
            <person name="Terpstra P."/>
            <person name="Tognoni A."/>
            <person name="Tosato V."/>
            <person name="Uchiyama S."/>
            <person name="Vandenbol M."/>
            <person name="Vannier F."/>
            <person name="Vassarotti A."/>
            <person name="Viari A."/>
            <person name="Wambutt R."/>
            <person name="Wedler E."/>
            <person name="Wedler H."/>
            <person name="Weitzenegger T."/>
            <person name="Winters P."/>
            <person name="Wipat A."/>
            <person name="Yamamoto H."/>
            <person name="Yamane K."/>
            <person name="Yasumoto K."/>
            <person name="Yata K."/>
            <person name="Yoshida K."/>
            <person name="Yoshikawa H.-F."/>
            <person name="Zumstein E."/>
            <person name="Yoshikawa H."/>
            <person name="Danchin A."/>
        </authorList>
    </citation>
    <scope>NUCLEOTIDE SEQUENCE [LARGE SCALE GENOMIC DNA]</scope>
    <source>
        <strain>168</strain>
    </source>
</reference>
<reference key="3">
    <citation type="journal article" date="2003" name="J. Biol. Chem.">
        <title>Guanine nucleotides guanosine 5'-diphosphate 3'-diphosphate and GTP co-operatively regulate the production of an antibiotic bacilysin in Bacillus subtilis.</title>
        <authorList>
            <person name="Inaoka T."/>
            <person name="Takahashi K."/>
            <person name="Ohnishi-Kameyama M."/>
            <person name="Yoshida M."/>
            <person name="Ochi K."/>
        </authorList>
    </citation>
    <scope>INDUCTION</scope>
    <scope>PATHWAY</scope>
    <source>
        <strain>168 / 61884</strain>
    </source>
</reference>
<reference key="4">
    <citation type="journal article" date="2005" name="Arch. Microbiol.">
        <title>bac genes for recombinant bacilysin and anticapsin production in Bacillus host strains.</title>
        <authorList>
            <person name="Steinborn G."/>
            <person name="Hajirezaei M.-R."/>
            <person name="Hofemeister J."/>
        </authorList>
    </citation>
    <scope>FUNCTION IN BACILYSIN PRODUCTION</scope>
    <scope>GENE NAME</scope>
</reference>
<reference key="5">
    <citation type="journal article" date="2010" name="Biochemistry">
        <title>Investigation of anticapsin biosynthesis reveals a four-enzyme pathway to tetrahydrotyrosine in Bacillus subtilis.</title>
        <authorList>
            <person name="Mahlstedt S.A."/>
            <person name="Walsh C.T."/>
        </authorList>
    </citation>
    <scope>FUNCTION</scope>
    <scope>CATALYTIC ACTIVITY</scope>
    <scope>PATHWAY</scope>
</reference>
<reference key="6">
    <citation type="journal article" date="2012" name="Biochemistry">
        <title>Olefin isomerization regiochemistries during tandem action of BacA and BacB on prephenate in bacilysin biosynthesis.</title>
        <authorList>
            <person name="Parker J.B."/>
            <person name="Walsh C.T."/>
        </authorList>
    </citation>
    <scope>FUNCTION</scope>
    <scope>CATALYTIC ACTIVITY</scope>
    <scope>PATHWAY</scope>
</reference>
<reference key="7">
    <citation type="journal article" date="2012" name="Biochemistry">
        <title>Stereochemical outcome at four stereogenic centers during conversion of prephenate to tetrahydrotyrosine by BacABGF in the bacilysin pathway.</title>
        <authorList>
            <person name="Parker J.B."/>
            <person name="Walsh C.T."/>
        </authorList>
    </citation>
    <scope>FUNCTION</scope>
    <scope>PATHWAY</scope>
</reference>
<reference key="8">
    <citation type="journal article" date="2009" name="J. Biol. Chem.">
        <title>Role of Bacillus subtilis BacB in the synthesis of bacilysin.</title>
        <authorList>
            <person name="Rajavel M."/>
            <person name="Mitra A."/>
            <person name="Gopal B."/>
        </authorList>
    </citation>
    <scope>X-RAY CRYSTALLOGRAPHY (1.87 ANGSTROMS) IN COMPLEX WITH SUBSTRATE ANALOG; COBALT AND IRON IONS</scope>
    <scope>FUNCTION</scope>
    <scope>CATALYTIC ACTIVITY</scope>
    <scope>BIOPHYSICOCHEMICAL PROPERTIES</scope>
    <scope>MUTAGENESIS OF LYS-107</scope>
    <scope>COFACTOR</scope>
    <scope>PATHWAY</scope>
    <scope>SUBUNIT</scope>
</reference>
<reference key="9">
    <citation type="journal article" date="2010" name="Acta Crystallogr. D">
        <title>Analysis of multiple crystal forms of Bacillus subtilis BacB suggests a role for a metal ion as a nucleant for crystallization.</title>
        <authorList>
            <person name="Rajavel M."/>
            <person name="Gopal B."/>
        </authorList>
    </citation>
    <scope>X-RAY CRYSTALLOGRAPHY (2.04 ANGSTROMS) IN COMPLEX WITH SUBSTRATE ANALOG; COABLT AND IRON IONS</scope>
    <scope>COFACTOR</scope>
    <scope>SUBUNIT</scope>
</reference>
<protein>
    <recommendedName>
        <fullName evidence="12">H2HPP isomerase</fullName>
        <ecNumber evidence="4 5 7">5.3.3.19</ecNumber>
    </recommendedName>
    <alternativeName>
        <fullName evidence="12">3-((4R)-4-hydroxycyclohexa-1,5-dien-1-yl)-2-oxopropanoate isomerase</fullName>
    </alternativeName>
    <alternativeName>
        <fullName evidence="9">Bacilysin biosynthesis protein BacB</fullName>
    </alternativeName>
    <alternativeName>
        <fullName evidence="10">Bi-cupin protein</fullName>
    </alternativeName>
</protein>
<evidence type="ECO:0000255" key="1"/>
<evidence type="ECO:0000269" key="2">
    <source>
    </source>
</evidence>
<evidence type="ECO:0000269" key="3">
    <source>
    </source>
</evidence>
<evidence type="ECO:0000269" key="4">
    <source>
    </source>
</evidence>
<evidence type="ECO:0000269" key="5">
    <source>
    </source>
</evidence>
<evidence type="ECO:0000269" key="6">
    <source>
    </source>
</evidence>
<evidence type="ECO:0000269" key="7">
    <source>
    </source>
</evidence>
<evidence type="ECO:0000269" key="8">
    <source>
    </source>
</evidence>
<evidence type="ECO:0000303" key="9">
    <source>
    </source>
</evidence>
<evidence type="ECO:0000303" key="10">
    <source>
    </source>
</evidence>
<evidence type="ECO:0000303" key="11">
    <source>
    </source>
</evidence>
<evidence type="ECO:0000305" key="12"/>
<evidence type="ECO:0000305" key="13">
    <source>
    </source>
</evidence>
<evidence type="ECO:0000305" key="14">
    <source>
    </source>
</evidence>
<evidence type="ECO:0000305" key="15">
    <source>
    </source>
</evidence>
<evidence type="ECO:0000305" key="16">
    <source>
    </source>
</evidence>
<evidence type="ECO:0007829" key="17">
    <source>
        <dbReference type="PDB" id="3H7J"/>
    </source>
</evidence>
<evidence type="ECO:0007829" key="18">
    <source>
        <dbReference type="PDB" id="3H9A"/>
    </source>
</evidence>
<dbReference type="EC" id="5.3.3.19" evidence="4 5 7"/>
<dbReference type="EMBL" id="X73124">
    <property type="protein sequence ID" value="CAA51637.1"/>
    <property type="molecule type" value="Genomic_DNA"/>
</dbReference>
<dbReference type="EMBL" id="AL009126">
    <property type="protein sequence ID" value="CAB15800.1"/>
    <property type="molecule type" value="Genomic_DNA"/>
</dbReference>
<dbReference type="PIR" id="S39736">
    <property type="entry name" value="S39736"/>
</dbReference>
<dbReference type="RefSeq" id="NP_391653.1">
    <property type="nucleotide sequence ID" value="NC_000964.3"/>
</dbReference>
<dbReference type="RefSeq" id="WP_003244300.1">
    <property type="nucleotide sequence ID" value="NZ_OZ025638.1"/>
</dbReference>
<dbReference type="PDB" id="3H7J">
    <property type="method" value="X-ray"/>
    <property type="resolution" value="1.87 A"/>
    <property type="chains" value="A/B=1-235"/>
</dbReference>
<dbReference type="PDB" id="3H7Y">
    <property type="method" value="X-ray"/>
    <property type="resolution" value="2.22 A"/>
    <property type="chains" value="A/B=1-235"/>
</dbReference>
<dbReference type="PDB" id="3H9A">
    <property type="method" value="X-ray"/>
    <property type="resolution" value="2.04 A"/>
    <property type="chains" value="A/B=1-235"/>
</dbReference>
<dbReference type="PDBsum" id="3H7J"/>
<dbReference type="PDBsum" id="3H7Y"/>
<dbReference type="PDBsum" id="3H9A"/>
<dbReference type="SMR" id="P39639"/>
<dbReference type="FunCoup" id="P39639">
    <property type="interactions" value="45"/>
</dbReference>
<dbReference type="STRING" id="224308.BSU37730"/>
<dbReference type="DrugBank" id="DB03884">
    <property type="generic name" value="Phenylpyruvic acid"/>
</dbReference>
<dbReference type="PaxDb" id="224308-BSU37730"/>
<dbReference type="EnsemblBacteria" id="CAB15800">
    <property type="protein sequence ID" value="CAB15800"/>
    <property type="gene ID" value="BSU_37730"/>
</dbReference>
<dbReference type="GeneID" id="937084"/>
<dbReference type="KEGG" id="bsu:BSU37730"/>
<dbReference type="PATRIC" id="fig|224308.179.peg.4085"/>
<dbReference type="eggNOG" id="COG1917">
    <property type="taxonomic scope" value="Bacteria"/>
</dbReference>
<dbReference type="InParanoid" id="P39639"/>
<dbReference type="OrthoDB" id="4105826at2"/>
<dbReference type="BioCyc" id="BSUB:BSU37730-MONOMER"/>
<dbReference type="BioCyc" id="MetaCyc:MONOMER-19124"/>
<dbReference type="BRENDA" id="5.3.3.19">
    <property type="organism ID" value="658"/>
</dbReference>
<dbReference type="UniPathway" id="UPA00100"/>
<dbReference type="EvolutionaryTrace" id="P39639"/>
<dbReference type="Proteomes" id="UP000001570">
    <property type="component" value="Chromosome"/>
</dbReference>
<dbReference type="GO" id="GO:0005737">
    <property type="term" value="C:cytoplasm"/>
    <property type="evidence" value="ECO:0007669"/>
    <property type="project" value="UniProtKB-SubCell"/>
</dbReference>
<dbReference type="GO" id="GO:0050897">
    <property type="term" value="F:cobalt ion binding"/>
    <property type="evidence" value="ECO:0000314"/>
    <property type="project" value="UniProtKB"/>
</dbReference>
<dbReference type="GO" id="GO:0016863">
    <property type="term" value="F:intramolecular oxidoreductase activity, transposing C=C bonds"/>
    <property type="evidence" value="ECO:0000314"/>
    <property type="project" value="UniProtKB"/>
</dbReference>
<dbReference type="GO" id="GO:0005506">
    <property type="term" value="F:iron ion binding"/>
    <property type="evidence" value="ECO:0000314"/>
    <property type="project" value="UniProtKB"/>
</dbReference>
<dbReference type="GO" id="GO:0017000">
    <property type="term" value="P:antibiotic biosynthetic process"/>
    <property type="evidence" value="ECO:0000314"/>
    <property type="project" value="UniProtKB"/>
</dbReference>
<dbReference type="CDD" id="cd10547">
    <property type="entry name" value="cupin_BacB_C"/>
    <property type="match status" value="1"/>
</dbReference>
<dbReference type="CDD" id="cd20307">
    <property type="entry name" value="cupin_BacB_N"/>
    <property type="match status" value="1"/>
</dbReference>
<dbReference type="FunFam" id="2.60.120.10:FF:000139">
    <property type="entry name" value="Bacilysin biosynthesis protein"/>
    <property type="match status" value="1"/>
</dbReference>
<dbReference type="Gene3D" id="2.60.120.10">
    <property type="entry name" value="Jelly Rolls"/>
    <property type="match status" value="2"/>
</dbReference>
<dbReference type="InterPro" id="IPR052535">
    <property type="entry name" value="Bacilysin_H2HPP_isomerase"/>
</dbReference>
<dbReference type="InterPro" id="IPR013096">
    <property type="entry name" value="Cupin_2"/>
</dbReference>
<dbReference type="InterPro" id="IPR014710">
    <property type="entry name" value="RmlC-like_jellyroll"/>
</dbReference>
<dbReference type="InterPro" id="IPR011051">
    <property type="entry name" value="RmlC_Cupin_sf"/>
</dbReference>
<dbReference type="PANTHER" id="PTHR40112">
    <property type="entry name" value="H2HPP ISOMERASE"/>
    <property type="match status" value="1"/>
</dbReference>
<dbReference type="PANTHER" id="PTHR40112:SF1">
    <property type="entry name" value="H2HPP ISOMERASE"/>
    <property type="match status" value="1"/>
</dbReference>
<dbReference type="Pfam" id="PF07883">
    <property type="entry name" value="Cupin_2"/>
    <property type="match status" value="2"/>
</dbReference>
<dbReference type="SUPFAM" id="SSF51182">
    <property type="entry name" value="RmlC-like cupins"/>
    <property type="match status" value="1"/>
</dbReference>